<keyword id="KW-0256">Endoplasmic reticulum</keyword>
<keyword id="KW-0274">FAD</keyword>
<keyword id="KW-0285">Flavoprotein</keyword>
<keyword id="KW-0288">FMN</keyword>
<keyword id="KW-0472">Membrane</keyword>
<keyword id="KW-0521">NADP</keyword>
<keyword id="KW-0560">Oxidoreductase</keyword>
<keyword id="KW-1185">Reference proteome</keyword>
<keyword id="KW-0812">Transmembrane</keyword>
<keyword id="KW-1133">Transmembrane helix</keyword>
<comment type="function">
    <text evidence="1">This enzyme is required for electron transfer from NADP to cytochrome P450 in microsomes. It can also provide electron transfer to heme oxygenase and cytochrome B5.</text>
</comment>
<comment type="catalytic activity">
    <reaction evidence="1">
        <text>2 oxidized [cytochrome P450] + NADPH = 2 reduced [cytochrome P450] + NADP(+) + H(+)</text>
        <dbReference type="Rhea" id="RHEA:24040"/>
        <dbReference type="Rhea" id="RHEA-COMP:14627"/>
        <dbReference type="Rhea" id="RHEA-COMP:14628"/>
        <dbReference type="ChEBI" id="CHEBI:15378"/>
        <dbReference type="ChEBI" id="CHEBI:55376"/>
        <dbReference type="ChEBI" id="CHEBI:57783"/>
        <dbReference type="ChEBI" id="CHEBI:58349"/>
        <dbReference type="ChEBI" id="CHEBI:60344"/>
        <dbReference type="EC" id="1.6.2.4"/>
    </reaction>
</comment>
<comment type="cofactor">
    <cofactor evidence="1">
        <name>FAD</name>
        <dbReference type="ChEBI" id="CHEBI:57692"/>
    </cofactor>
    <text evidence="1">Binds 1 FAD per monomer.</text>
</comment>
<comment type="cofactor">
    <cofactor evidence="1">
        <name>FMN</name>
        <dbReference type="ChEBI" id="CHEBI:58210"/>
    </cofactor>
    <text evidence="1">Binds 1 FMN per monomer.</text>
</comment>
<comment type="subcellular location">
    <subcellularLocation>
        <location evidence="1">Endoplasmic reticulum membrane</location>
        <topology evidence="1">Single-pass membrane protein</topology>
        <orientation evidence="1">Cytoplasmic side</orientation>
    </subcellularLocation>
</comment>
<comment type="developmental stage">
    <text>Expressed throughout development, with high levels before metamorphosis and low levels in pupae.</text>
</comment>
<comment type="similarity">
    <text evidence="1">Belongs to the NADPH--cytochrome P450 reductase family.</text>
</comment>
<comment type="similarity">
    <text evidence="1">In the N-terminal section; belongs to the flavodoxin family.</text>
</comment>
<comment type="similarity">
    <text evidence="1">In the C-terminal section; belongs to the flavoprotein pyridine nucleotide cytochrome reductase family.</text>
</comment>
<proteinExistence type="evidence at transcript level"/>
<feature type="chain" id="PRO_0000167603" description="NADPH--cytochrome P450 reductase">
    <location>
        <begin position="1"/>
        <end position="671"/>
    </location>
</feature>
<feature type="topological domain" description="Lumenal" evidence="1">
    <location>
        <begin position="1"/>
        <end position="14"/>
    </location>
</feature>
<feature type="transmembrane region" description="Helical" evidence="1">
    <location>
        <begin position="15"/>
        <end position="35"/>
    </location>
</feature>
<feature type="topological domain" description="Cytoplasmic" evidence="1">
    <location>
        <begin position="36"/>
        <end position="671"/>
    </location>
</feature>
<feature type="domain" description="Flavodoxin-like" evidence="1">
    <location>
        <begin position="77"/>
        <end position="221"/>
    </location>
</feature>
<feature type="domain" description="FAD-binding FR-type" evidence="1">
    <location>
        <begin position="276"/>
        <end position="515"/>
    </location>
</feature>
<feature type="binding site" evidence="1">
    <location>
        <begin position="83"/>
        <end position="88"/>
    </location>
    <ligand>
        <name>FMN</name>
        <dbReference type="ChEBI" id="CHEBI:58210"/>
    </ligand>
</feature>
<feature type="binding site" evidence="1">
    <location>
        <begin position="135"/>
        <end position="138"/>
    </location>
    <ligand>
        <name>FMN</name>
        <dbReference type="ChEBI" id="CHEBI:58210"/>
    </ligand>
</feature>
<feature type="binding site" evidence="1">
    <location>
        <begin position="170"/>
        <end position="179"/>
    </location>
    <ligand>
        <name>FMN</name>
        <dbReference type="ChEBI" id="CHEBI:58210"/>
    </ligand>
</feature>
<feature type="binding site" evidence="1">
    <location>
        <position position="205"/>
    </location>
    <ligand>
        <name>FMN</name>
        <dbReference type="ChEBI" id="CHEBI:58210"/>
    </ligand>
</feature>
<feature type="binding site" evidence="1">
    <location>
        <position position="295"/>
    </location>
    <ligand>
        <name>NADP(+)</name>
        <dbReference type="ChEBI" id="CHEBI:58349"/>
    </ligand>
</feature>
<feature type="binding site" evidence="1">
    <location>
        <begin position="451"/>
        <end position="454"/>
    </location>
    <ligand>
        <name>FAD</name>
        <dbReference type="ChEBI" id="CHEBI:57692"/>
    </ligand>
</feature>
<feature type="binding site" evidence="1">
    <location>
        <begin position="469"/>
        <end position="471"/>
    </location>
    <ligand>
        <name>FAD</name>
        <dbReference type="ChEBI" id="CHEBI:57692"/>
    </ligand>
</feature>
<feature type="binding site" evidence="1">
    <location>
        <position position="475"/>
    </location>
    <ligand>
        <name>FAD</name>
        <dbReference type="ChEBI" id="CHEBI:57692"/>
    </ligand>
</feature>
<feature type="binding site" evidence="1">
    <location>
        <begin position="485"/>
        <end position="488"/>
    </location>
    <ligand>
        <name>FAD</name>
        <dbReference type="ChEBI" id="CHEBI:57692"/>
    </ligand>
</feature>
<feature type="binding site" evidence="1">
    <location>
        <position position="529"/>
    </location>
    <ligand>
        <name>NADP(+)</name>
        <dbReference type="ChEBI" id="CHEBI:58349"/>
    </ligand>
</feature>
<feature type="binding site" evidence="1">
    <location>
        <begin position="589"/>
        <end position="590"/>
    </location>
    <ligand>
        <name>NADP(+)</name>
        <dbReference type="ChEBI" id="CHEBI:58349"/>
    </ligand>
</feature>
<feature type="binding site" evidence="1">
    <location>
        <begin position="595"/>
        <end position="599"/>
    </location>
    <ligand>
        <name>NADP(+)</name>
        <dbReference type="ChEBI" id="CHEBI:58349"/>
    </ligand>
</feature>
<feature type="binding site" evidence="1">
    <location>
        <position position="632"/>
    </location>
    <ligand>
        <name>NADP(+)</name>
        <dbReference type="ChEBI" id="CHEBI:58349"/>
    </ligand>
</feature>
<feature type="binding site" evidence="1">
    <location>
        <position position="670"/>
    </location>
    <ligand>
        <name>FAD</name>
        <dbReference type="ChEBI" id="CHEBI:57692"/>
    </ligand>
</feature>
<evidence type="ECO:0000255" key="1">
    <source>
        <dbReference type="HAMAP-Rule" id="MF_03212"/>
    </source>
</evidence>
<reference key="1">
    <citation type="journal article" date="1993" name="Insect Biochem. Mol. Biol.">
        <title>The cDNA and deduced protein sequence of house fly NADPH-cytochrome P450 reductase.</title>
        <authorList>
            <person name="Koener J.F."/>
            <person name="Carino F.A."/>
            <person name="Feyereisen R."/>
        </authorList>
    </citation>
    <scope>NUCLEOTIDE SEQUENCE [MRNA]</scope>
    <source>
        <strain>Rutgers</strain>
        <tissue>Abdomen</tissue>
    </source>
</reference>
<dbReference type="EC" id="1.6.2.4" evidence="1"/>
<dbReference type="EMBL" id="L19897">
    <property type="protein sequence ID" value="AAA29295.1"/>
    <property type="molecule type" value="mRNA"/>
</dbReference>
<dbReference type="PIR" id="A56592">
    <property type="entry name" value="A56592"/>
</dbReference>
<dbReference type="RefSeq" id="NP_001273818.1">
    <property type="nucleotide sequence ID" value="NM_001286889.1"/>
</dbReference>
<dbReference type="RefSeq" id="XP_011294253.1">
    <property type="nucleotide sequence ID" value="XM_011295951.2"/>
</dbReference>
<dbReference type="SMR" id="Q07994"/>
<dbReference type="STRING" id="7370.Q07994"/>
<dbReference type="EnsemblMetazoa" id="MDOA011246-RC">
    <property type="protein sequence ID" value="MDOA011246-PC"/>
    <property type="gene ID" value="MDOA011246"/>
</dbReference>
<dbReference type="EnsemblMetazoa" id="MDOA011246-RD">
    <property type="protein sequence ID" value="MDOA011246-PD"/>
    <property type="gene ID" value="MDOA011246"/>
</dbReference>
<dbReference type="GeneID" id="101890161"/>
<dbReference type="KEGG" id="mde:101890161"/>
<dbReference type="CTD" id="33883"/>
<dbReference type="VEuPathDB" id="VectorBase:MDOA011246"/>
<dbReference type="VEuPathDB" id="VectorBase:MDOMA2_010559"/>
<dbReference type="eggNOG" id="KOG1158">
    <property type="taxonomic scope" value="Eukaryota"/>
</dbReference>
<dbReference type="OrthoDB" id="1856718at2759"/>
<dbReference type="BioCyc" id="MetaCyc:MONOMER-18499"/>
<dbReference type="SABIO-RK" id="Q07994"/>
<dbReference type="Proteomes" id="UP000694905">
    <property type="component" value="Unplaced"/>
</dbReference>
<dbReference type="GO" id="GO:0005829">
    <property type="term" value="C:cytosol"/>
    <property type="evidence" value="ECO:0007669"/>
    <property type="project" value="TreeGrafter"/>
</dbReference>
<dbReference type="GO" id="GO:0005789">
    <property type="term" value="C:endoplasmic reticulum membrane"/>
    <property type="evidence" value="ECO:0007669"/>
    <property type="project" value="UniProtKB-SubCell"/>
</dbReference>
<dbReference type="GO" id="GO:0050660">
    <property type="term" value="F:flavin adenine dinucleotide binding"/>
    <property type="evidence" value="ECO:0007669"/>
    <property type="project" value="UniProtKB-UniRule"/>
</dbReference>
<dbReference type="GO" id="GO:0010181">
    <property type="term" value="F:FMN binding"/>
    <property type="evidence" value="ECO:0007669"/>
    <property type="project" value="UniProtKB-UniRule"/>
</dbReference>
<dbReference type="GO" id="GO:0050661">
    <property type="term" value="F:NADP binding"/>
    <property type="evidence" value="ECO:0007669"/>
    <property type="project" value="UniProtKB-UniRule"/>
</dbReference>
<dbReference type="GO" id="GO:0003958">
    <property type="term" value="F:NADPH-hemoprotein reductase activity"/>
    <property type="evidence" value="ECO:0007669"/>
    <property type="project" value="UniProtKB-UniRule"/>
</dbReference>
<dbReference type="GO" id="GO:0009725">
    <property type="term" value="P:response to hormone"/>
    <property type="evidence" value="ECO:0007669"/>
    <property type="project" value="TreeGrafter"/>
</dbReference>
<dbReference type="CDD" id="cd06204">
    <property type="entry name" value="CYPOR"/>
    <property type="match status" value="1"/>
</dbReference>
<dbReference type="FunFam" id="1.20.990.10:FF:000001">
    <property type="entry name" value="NADPH--cytochrome P450 reductase"/>
    <property type="match status" value="1"/>
</dbReference>
<dbReference type="FunFam" id="3.40.50.360:FF:000009">
    <property type="entry name" value="NADPH--cytochrome P450 reductase"/>
    <property type="match status" value="1"/>
</dbReference>
<dbReference type="FunFam" id="3.40.50.80:FF:000001">
    <property type="entry name" value="NADPH--cytochrome P450 reductase 1"/>
    <property type="match status" value="1"/>
</dbReference>
<dbReference type="Gene3D" id="3.40.50.360">
    <property type="match status" value="1"/>
</dbReference>
<dbReference type="Gene3D" id="1.20.990.10">
    <property type="entry name" value="NADPH-cytochrome p450 Reductase, Chain A, domain 3"/>
    <property type="match status" value="1"/>
</dbReference>
<dbReference type="Gene3D" id="3.40.50.80">
    <property type="entry name" value="Nucleotide-binding domain of ferredoxin-NADP reductase (FNR) module"/>
    <property type="match status" value="1"/>
</dbReference>
<dbReference type="Gene3D" id="2.40.30.10">
    <property type="entry name" value="Translation factors"/>
    <property type="match status" value="1"/>
</dbReference>
<dbReference type="HAMAP" id="MF_03212">
    <property type="entry name" value="NCPR"/>
    <property type="match status" value="1"/>
</dbReference>
<dbReference type="InterPro" id="IPR003097">
    <property type="entry name" value="CysJ-like_FAD-binding"/>
</dbReference>
<dbReference type="InterPro" id="IPR017927">
    <property type="entry name" value="FAD-bd_FR_type"/>
</dbReference>
<dbReference type="InterPro" id="IPR001094">
    <property type="entry name" value="Flavdoxin-like"/>
</dbReference>
<dbReference type="InterPro" id="IPR008254">
    <property type="entry name" value="Flavodoxin/NO_synth"/>
</dbReference>
<dbReference type="InterPro" id="IPR001709">
    <property type="entry name" value="Flavoprot_Pyr_Nucl_cyt_Rdtase"/>
</dbReference>
<dbReference type="InterPro" id="IPR029039">
    <property type="entry name" value="Flavoprotein-like_sf"/>
</dbReference>
<dbReference type="InterPro" id="IPR039261">
    <property type="entry name" value="FNR_nucleotide-bd"/>
</dbReference>
<dbReference type="InterPro" id="IPR023173">
    <property type="entry name" value="NADPH_Cyt_P450_Rdtase_alpha"/>
</dbReference>
<dbReference type="InterPro" id="IPR001433">
    <property type="entry name" value="OxRdtase_FAD/NAD-bd"/>
</dbReference>
<dbReference type="InterPro" id="IPR023208">
    <property type="entry name" value="P450R"/>
</dbReference>
<dbReference type="InterPro" id="IPR017938">
    <property type="entry name" value="Riboflavin_synthase-like_b-brl"/>
</dbReference>
<dbReference type="PANTHER" id="PTHR19384:SF17">
    <property type="entry name" value="NADPH--CYTOCHROME P450 REDUCTASE"/>
    <property type="match status" value="1"/>
</dbReference>
<dbReference type="PANTHER" id="PTHR19384">
    <property type="entry name" value="NITRIC OXIDE SYNTHASE-RELATED"/>
    <property type="match status" value="1"/>
</dbReference>
<dbReference type="Pfam" id="PF00667">
    <property type="entry name" value="FAD_binding_1"/>
    <property type="match status" value="1"/>
</dbReference>
<dbReference type="Pfam" id="PF00258">
    <property type="entry name" value="Flavodoxin_1"/>
    <property type="match status" value="1"/>
</dbReference>
<dbReference type="Pfam" id="PF00175">
    <property type="entry name" value="NAD_binding_1"/>
    <property type="match status" value="1"/>
</dbReference>
<dbReference type="PIRSF" id="PIRSF000208">
    <property type="entry name" value="P450R"/>
    <property type="match status" value="1"/>
</dbReference>
<dbReference type="PRINTS" id="PR00369">
    <property type="entry name" value="FLAVODOXIN"/>
</dbReference>
<dbReference type="PRINTS" id="PR00371">
    <property type="entry name" value="FPNCR"/>
</dbReference>
<dbReference type="SUPFAM" id="SSF52343">
    <property type="entry name" value="Ferredoxin reductase-like, C-terminal NADP-linked domain"/>
    <property type="match status" value="1"/>
</dbReference>
<dbReference type="SUPFAM" id="SSF52218">
    <property type="entry name" value="Flavoproteins"/>
    <property type="match status" value="1"/>
</dbReference>
<dbReference type="SUPFAM" id="SSF63380">
    <property type="entry name" value="Riboflavin synthase domain-like"/>
    <property type="match status" value="1"/>
</dbReference>
<dbReference type="PROSITE" id="PS51384">
    <property type="entry name" value="FAD_FR"/>
    <property type="match status" value="1"/>
</dbReference>
<dbReference type="PROSITE" id="PS50902">
    <property type="entry name" value="FLAVODOXIN_LIKE"/>
    <property type="match status" value="1"/>
</dbReference>
<sequence length="671" mass="76358">MSAEHVEEVVSEEPFLGTLDIALLVVLLVGATWYFMRSRKKEEAPIRSYSIQPTTVSTVSTTENSFIKKLKASGRSLVVFYGSQTGTAEEFAGRLAKEGLRYRMKGMVADPEECDMEELLQMKDIPNSLAVFCLATYGEGDPTDNAMEFYEWITNGEVDLTGLNYAVFGLGNKTYEHYNKVAIYVDKRLEELGATRVFELGLGDDDANIEDDFITWKDRFWPSVCDFFGIEGSGEEVLMRQFRLLEQPDVQPDRIYTGEIARLHSMQNQRPPFDAKNPFLASVIVNRELHKGGGRSCMHIELDIDGSKMRYDAGDHIAMYPINDKILVEKLGKLCDANLDTVFSLINTDTDSSKKHPFPCPTTYRTALTHYLEITAIPRTHILKELAEYCSDEKDKEFLRNMASITPEGKEKYQNWIQNSSRNIVHILEDIKSCRPPIDHICELLPRLQPRYYSISSSSKLYPTNVHITAVLVQYETPTGRVNKGVATSYMKEKNPSVGEVKVPVFIRKSQFRLPTKSEIPIIMVGPGTGLAPFRGFIQERQFLRDGGKVVGDTILYFGCRKKDEDFIYREELEQYVQNGTLTLKTAFSRDQQEKIYVTHLIEQDADLIWKVIGEQKGHFYICGDAKNMAVDVRNILVKILSTKGNMNESDAVQYIKKMEAQKRYSADVWS</sequence>
<name>NCPR_MUSDO</name>
<organism>
    <name type="scientific">Musca domestica</name>
    <name type="common">House fly</name>
    <dbReference type="NCBI Taxonomy" id="7370"/>
    <lineage>
        <taxon>Eukaryota</taxon>
        <taxon>Metazoa</taxon>
        <taxon>Ecdysozoa</taxon>
        <taxon>Arthropoda</taxon>
        <taxon>Hexapoda</taxon>
        <taxon>Insecta</taxon>
        <taxon>Pterygota</taxon>
        <taxon>Neoptera</taxon>
        <taxon>Endopterygota</taxon>
        <taxon>Diptera</taxon>
        <taxon>Brachycera</taxon>
        <taxon>Muscomorpha</taxon>
        <taxon>Muscoidea</taxon>
        <taxon>Muscidae</taxon>
        <taxon>Musca</taxon>
    </lineage>
</organism>
<protein>
    <recommendedName>
        <fullName evidence="1">NADPH--cytochrome P450 reductase</fullName>
        <shortName evidence="1">CPR</shortName>
        <shortName evidence="1">P450R</shortName>
        <ecNumber evidence="1">1.6.2.4</ecNumber>
    </recommendedName>
</protein>
<accession>Q07994</accession>